<keyword id="KW-0963">Cytoplasm</keyword>
<keyword id="KW-0312">Gluconeogenesis</keyword>
<keyword id="KW-0324">Glycolysis</keyword>
<keyword id="KW-0413">Isomerase</keyword>
<keyword id="KW-1185">Reference proteome</keyword>
<proteinExistence type="inferred from homology"/>
<accession>P0A861</accession>
<accession>P04790</accession>
<protein>
    <recommendedName>
        <fullName evidence="1">Triosephosphate isomerase</fullName>
        <shortName evidence="1">TIM</shortName>
        <shortName evidence="1">TPI</shortName>
        <ecNumber evidence="1">5.3.1.1</ecNumber>
    </recommendedName>
    <alternativeName>
        <fullName evidence="1">Triose-phosphate isomerase</fullName>
    </alternativeName>
</protein>
<dbReference type="EC" id="5.3.1.1" evidence="1"/>
<dbReference type="EMBL" id="AE005674">
    <property type="protein sequence ID" value="AAN45431.1"/>
    <property type="molecule type" value="Genomic_DNA"/>
</dbReference>
<dbReference type="EMBL" id="AE014073">
    <property type="protein sequence ID" value="AAP18769.1"/>
    <property type="molecule type" value="Genomic_DNA"/>
</dbReference>
<dbReference type="RefSeq" id="NP_709724.1">
    <property type="nucleotide sequence ID" value="NC_004337.2"/>
</dbReference>
<dbReference type="RefSeq" id="WP_001216325.1">
    <property type="nucleotide sequence ID" value="NZ_WPGW01000012.1"/>
</dbReference>
<dbReference type="SMR" id="P0A861"/>
<dbReference type="STRING" id="198214.SF3997"/>
<dbReference type="PaxDb" id="198214-SF3997"/>
<dbReference type="GeneID" id="1025379"/>
<dbReference type="GeneID" id="93777979"/>
<dbReference type="KEGG" id="sfl:SF3997"/>
<dbReference type="KEGG" id="sfx:S3750"/>
<dbReference type="PATRIC" id="fig|198214.7.peg.4710"/>
<dbReference type="HOGENOM" id="CLU_024251_2_1_6"/>
<dbReference type="UniPathway" id="UPA00109">
    <property type="reaction ID" value="UER00189"/>
</dbReference>
<dbReference type="UniPathway" id="UPA00138"/>
<dbReference type="Proteomes" id="UP000001006">
    <property type="component" value="Chromosome"/>
</dbReference>
<dbReference type="Proteomes" id="UP000002673">
    <property type="component" value="Chromosome"/>
</dbReference>
<dbReference type="GO" id="GO:0005829">
    <property type="term" value="C:cytosol"/>
    <property type="evidence" value="ECO:0007669"/>
    <property type="project" value="TreeGrafter"/>
</dbReference>
<dbReference type="GO" id="GO:0004807">
    <property type="term" value="F:triose-phosphate isomerase activity"/>
    <property type="evidence" value="ECO:0007669"/>
    <property type="project" value="UniProtKB-UniRule"/>
</dbReference>
<dbReference type="GO" id="GO:0006094">
    <property type="term" value="P:gluconeogenesis"/>
    <property type="evidence" value="ECO:0007669"/>
    <property type="project" value="UniProtKB-UniRule"/>
</dbReference>
<dbReference type="GO" id="GO:0046166">
    <property type="term" value="P:glyceraldehyde-3-phosphate biosynthetic process"/>
    <property type="evidence" value="ECO:0007669"/>
    <property type="project" value="TreeGrafter"/>
</dbReference>
<dbReference type="GO" id="GO:0019563">
    <property type="term" value="P:glycerol catabolic process"/>
    <property type="evidence" value="ECO:0007669"/>
    <property type="project" value="TreeGrafter"/>
</dbReference>
<dbReference type="GO" id="GO:0006096">
    <property type="term" value="P:glycolytic process"/>
    <property type="evidence" value="ECO:0007669"/>
    <property type="project" value="UniProtKB-UniRule"/>
</dbReference>
<dbReference type="CDD" id="cd00311">
    <property type="entry name" value="TIM"/>
    <property type="match status" value="1"/>
</dbReference>
<dbReference type="FunFam" id="3.20.20.70:FF:000020">
    <property type="entry name" value="Triosephosphate isomerase"/>
    <property type="match status" value="1"/>
</dbReference>
<dbReference type="Gene3D" id="3.20.20.70">
    <property type="entry name" value="Aldolase class I"/>
    <property type="match status" value="1"/>
</dbReference>
<dbReference type="HAMAP" id="MF_00147_B">
    <property type="entry name" value="TIM_B"/>
    <property type="match status" value="1"/>
</dbReference>
<dbReference type="InterPro" id="IPR013785">
    <property type="entry name" value="Aldolase_TIM"/>
</dbReference>
<dbReference type="InterPro" id="IPR035990">
    <property type="entry name" value="TIM_sf"/>
</dbReference>
<dbReference type="InterPro" id="IPR022896">
    <property type="entry name" value="TrioseP_Isoase_bac/euk"/>
</dbReference>
<dbReference type="InterPro" id="IPR000652">
    <property type="entry name" value="Triosephosphate_isomerase"/>
</dbReference>
<dbReference type="InterPro" id="IPR020861">
    <property type="entry name" value="Triosephosphate_isomerase_AS"/>
</dbReference>
<dbReference type="NCBIfam" id="TIGR00419">
    <property type="entry name" value="tim"/>
    <property type="match status" value="1"/>
</dbReference>
<dbReference type="PANTHER" id="PTHR21139">
    <property type="entry name" value="TRIOSEPHOSPHATE ISOMERASE"/>
    <property type="match status" value="1"/>
</dbReference>
<dbReference type="PANTHER" id="PTHR21139:SF42">
    <property type="entry name" value="TRIOSEPHOSPHATE ISOMERASE"/>
    <property type="match status" value="1"/>
</dbReference>
<dbReference type="Pfam" id="PF00121">
    <property type="entry name" value="TIM"/>
    <property type="match status" value="1"/>
</dbReference>
<dbReference type="SUPFAM" id="SSF51351">
    <property type="entry name" value="Triosephosphate isomerase (TIM)"/>
    <property type="match status" value="1"/>
</dbReference>
<dbReference type="PROSITE" id="PS00171">
    <property type="entry name" value="TIM_1"/>
    <property type="match status" value="1"/>
</dbReference>
<dbReference type="PROSITE" id="PS51440">
    <property type="entry name" value="TIM_2"/>
    <property type="match status" value="1"/>
</dbReference>
<reference key="1">
    <citation type="journal article" date="2002" name="Nucleic Acids Res.">
        <title>Genome sequence of Shigella flexneri 2a: insights into pathogenicity through comparison with genomes of Escherichia coli K12 and O157.</title>
        <authorList>
            <person name="Jin Q."/>
            <person name="Yuan Z."/>
            <person name="Xu J."/>
            <person name="Wang Y."/>
            <person name="Shen Y."/>
            <person name="Lu W."/>
            <person name="Wang J."/>
            <person name="Liu H."/>
            <person name="Yang J."/>
            <person name="Yang F."/>
            <person name="Zhang X."/>
            <person name="Zhang J."/>
            <person name="Yang G."/>
            <person name="Wu H."/>
            <person name="Qu D."/>
            <person name="Dong J."/>
            <person name="Sun L."/>
            <person name="Xue Y."/>
            <person name="Zhao A."/>
            <person name="Gao Y."/>
            <person name="Zhu J."/>
            <person name="Kan B."/>
            <person name="Ding K."/>
            <person name="Chen S."/>
            <person name="Cheng H."/>
            <person name="Yao Z."/>
            <person name="He B."/>
            <person name="Chen R."/>
            <person name="Ma D."/>
            <person name="Qiang B."/>
            <person name="Wen Y."/>
            <person name="Hou Y."/>
            <person name="Yu J."/>
        </authorList>
    </citation>
    <scope>NUCLEOTIDE SEQUENCE [LARGE SCALE GENOMIC DNA]</scope>
    <source>
        <strain>301 / Serotype 2a</strain>
    </source>
</reference>
<reference key="2">
    <citation type="journal article" date="2003" name="Infect. Immun.">
        <title>Complete genome sequence and comparative genomics of Shigella flexneri serotype 2a strain 2457T.</title>
        <authorList>
            <person name="Wei J."/>
            <person name="Goldberg M.B."/>
            <person name="Burland V."/>
            <person name="Venkatesan M.M."/>
            <person name="Deng W."/>
            <person name="Fournier G."/>
            <person name="Mayhew G.F."/>
            <person name="Plunkett G. III"/>
            <person name="Rose D.J."/>
            <person name="Darling A."/>
            <person name="Mau B."/>
            <person name="Perna N.T."/>
            <person name="Payne S.M."/>
            <person name="Runyen-Janecky L.J."/>
            <person name="Zhou S."/>
            <person name="Schwartz D.C."/>
            <person name="Blattner F.R."/>
        </authorList>
    </citation>
    <scope>NUCLEOTIDE SEQUENCE [LARGE SCALE GENOMIC DNA]</scope>
    <source>
        <strain>ATCC 700930 / 2457T / Serotype 2a</strain>
    </source>
</reference>
<feature type="chain" id="PRO_0000090282" description="Triosephosphate isomerase">
    <location>
        <begin position="1"/>
        <end position="255"/>
    </location>
</feature>
<feature type="active site" description="Electrophile" evidence="1">
    <location>
        <position position="95"/>
    </location>
</feature>
<feature type="active site" description="Proton acceptor" evidence="1">
    <location>
        <position position="167"/>
    </location>
</feature>
<feature type="binding site" evidence="1">
    <location>
        <begin position="9"/>
        <end position="11"/>
    </location>
    <ligand>
        <name>substrate</name>
    </ligand>
</feature>
<feature type="binding site" evidence="1">
    <location>
        <position position="173"/>
    </location>
    <ligand>
        <name>substrate</name>
    </ligand>
</feature>
<feature type="binding site" evidence="1">
    <location>
        <position position="212"/>
    </location>
    <ligand>
        <name>substrate</name>
    </ligand>
</feature>
<feature type="binding site" evidence="1">
    <location>
        <begin position="233"/>
        <end position="234"/>
    </location>
    <ligand>
        <name>substrate</name>
    </ligand>
</feature>
<sequence>MRHPLVMGNWKLNGSRHMVHELVSNLRKELAGVAGCAVAIAPPEMYIDMAKREAEGSHIMLGAQNVDLNLSGAFTGETSAAMLKDIGAQYIIIGHSERRTYHKESDELIAKKFAVLKEQGLTPVLCIGETEAENEAGKTEEVCARQIDAVLKTQGAAAFEGAVIAYEPVWAIGTGKSATPAQAQAVHKFIRDHIAKVDANIAEQVIIQYGGSVNASNAAELFAQPDIDGALVGGASLKADAFAVIVKAAEAAKQA</sequence>
<gene>
    <name evidence="1" type="primary">tpiA</name>
    <name type="synonym">tpi</name>
    <name type="ordered locus">SF3997</name>
    <name type="ordered locus">S3750</name>
</gene>
<comment type="function">
    <text evidence="1">Involved in the gluconeogenesis. Catalyzes stereospecifically the conversion of dihydroxyacetone phosphate (DHAP) to D-glyceraldehyde-3-phosphate (G3P).</text>
</comment>
<comment type="catalytic activity">
    <reaction evidence="1">
        <text>D-glyceraldehyde 3-phosphate = dihydroxyacetone phosphate</text>
        <dbReference type="Rhea" id="RHEA:18585"/>
        <dbReference type="ChEBI" id="CHEBI:57642"/>
        <dbReference type="ChEBI" id="CHEBI:59776"/>
        <dbReference type="EC" id="5.3.1.1"/>
    </reaction>
</comment>
<comment type="pathway">
    <text evidence="1">Carbohydrate biosynthesis; gluconeogenesis.</text>
</comment>
<comment type="pathway">
    <text evidence="1">Carbohydrate degradation; glycolysis; D-glyceraldehyde 3-phosphate from glycerone phosphate: step 1/1.</text>
</comment>
<comment type="subunit">
    <text evidence="1">Homodimer.</text>
</comment>
<comment type="subcellular location">
    <subcellularLocation>
        <location evidence="1">Cytoplasm</location>
    </subcellularLocation>
</comment>
<comment type="similarity">
    <text evidence="1">Belongs to the triosephosphate isomerase family.</text>
</comment>
<name>TPIS_SHIFL</name>
<evidence type="ECO:0000255" key="1">
    <source>
        <dbReference type="HAMAP-Rule" id="MF_00147"/>
    </source>
</evidence>
<organism>
    <name type="scientific">Shigella flexneri</name>
    <dbReference type="NCBI Taxonomy" id="623"/>
    <lineage>
        <taxon>Bacteria</taxon>
        <taxon>Pseudomonadati</taxon>
        <taxon>Pseudomonadota</taxon>
        <taxon>Gammaproteobacteria</taxon>
        <taxon>Enterobacterales</taxon>
        <taxon>Enterobacteriaceae</taxon>
        <taxon>Shigella</taxon>
    </lineage>
</organism>